<comment type="function">
    <text evidence="1">Forms part of the ribosomal stalk, playing a central role in the interaction of the ribosome with GTP-bound translation factors.</text>
</comment>
<comment type="subunit">
    <text evidence="1">Part of the ribosomal stalk of the 50S ribosomal subunit. The N-terminus interacts with L11 and the large rRNA to form the base of the stalk. The C-terminus forms an elongated spine to which L12 dimers bind in a sequential fashion forming a multimeric L10(L12)X complex.</text>
</comment>
<comment type="similarity">
    <text evidence="1">Belongs to the universal ribosomal protein uL10 family.</text>
</comment>
<keyword id="KW-1185">Reference proteome</keyword>
<keyword id="KW-0687">Ribonucleoprotein</keyword>
<keyword id="KW-0689">Ribosomal protein</keyword>
<keyword id="KW-0694">RNA-binding</keyword>
<keyword id="KW-0699">rRNA-binding</keyword>
<organism>
    <name type="scientific">Acidiphilium cryptum (strain JF-5)</name>
    <dbReference type="NCBI Taxonomy" id="349163"/>
    <lineage>
        <taxon>Bacteria</taxon>
        <taxon>Pseudomonadati</taxon>
        <taxon>Pseudomonadota</taxon>
        <taxon>Alphaproteobacteria</taxon>
        <taxon>Acetobacterales</taxon>
        <taxon>Acidocellaceae</taxon>
        <taxon>Acidiphilium</taxon>
    </lineage>
</organism>
<feature type="chain" id="PRO_1000005457" description="Large ribosomal subunit protein uL10">
    <location>
        <begin position="1"/>
        <end position="174"/>
    </location>
</feature>
<evidence type="ECO:0000255" key="1">
    <source>
        <dbReference type="HAMAP-Rule" id="MF_00362"/>
    </source>
</evidence>
<evidence type="ECO:0000305" key="2"/>
<gene>
    <name evidence="1" type="primary">rplJ</name>
    <name type="ordered locus">Acry_1954</name>
</gene>
<accession>A5FZX3</accession>
<dbReference type="EMBL" id="CP000697">
    <property type="protein sequence ID" value="ABQ31155.1"/>
    <property type="molecule type" value="Genomic_DNA"/>
</dbReference>
<dbReference type="RefSeq" id="WP_012039724.1">
    <property type="nucleotide sequence ID" value="NC_009484.1"/>
</dbReference>
<dbReference type="SMR" id="A5FZX3"/>
<dbReference type="STRING" id="349163.Acry_1954"/>
<dbReference type="KEGG" id="acr:Acry_1954"/>
<dbReference type="eggNOG" id="COG0244">
    <property type="taxonomic scope" value="Bacteria"/>
</dbReference>
<dbReference type="HOGENOM" id="CLU_092227_0_0_5"/>
<dbReference type="Proteomes" id="UP000000245">
    <property type="component" value="Chromosome"/>
</dbReference>
<dbReference type="GO" id="GO:0015934">
    <property type="term" value="C:large ribosomal subunit"/>
    <property type="evidence" value="ECO:0007669"/>
    <property type="project" value="InterPro"/>
</dbReference>
<dbReference type="GO" id="GO:0070180">
    <property type="term" value="F:large ribosomal subunit rRNA binding"/>
    <property type="evidence" value="ECO:0007669"/>
    <property type="project" value="UniProtKB-UniRule"/>
</dbReference>
<dbReference type="GO" id="GO:0003735">
    <property type="term" value="F:structural constituent of ribosome"/>
    <property type="evidence" value="ECO:0007669"/>
    <property type="project" value="InterPro"/>
</dbReference>
<dbReference type="GO" id="GO:0006412">
    <property type="term" value="P:translation"/>
    <property type="evidence" value="ECO:0007669"/>
    <property type="project" value="UniProtKB-UniRule"/>
</dbReference>
<dbReference type="CDD" id="cd05797">
    <property type="entry name" value="Ribosomal_L10"/>
    <property type="match status" value="1"/>
</dbReference>
<dbReference type="Gene3D" id="3.30.70.1730">
    <property type="match status" value="1"/>
</dbReference>
<dbReference type="Gene3D" id="6.10.250.290">
    <property type="match status" value="1"/>
</dbReference>
<dbReference type="HAMAP" id="MF_00362">
    <property type="entry name" value="Ribosomal_uL10"/>
    <property type="match status" value="1"/>
</dbReference>
<dbReference type="InterPro" id="IPR001790">
    <property type="entry name" value="Ribosomal_uL10"/>
</dbReference>
<dbReference type="InterPro" id="IPR043141">
    <property type="entry name" value="Ribosomal_uL10-like_sf"/>
</dbReference>
<dbReference type="InterPro" id="IPR022973">
    <property type="entry name" value="Ribosomal_uL10_bac"/>
</dbReference>
<dbReference type="InterPro" id="IPR047865">
    <property type="entry name" value="Ribosomal_uL10_bac_type"/>
</dbReference>
<dbReference type="InterPro" id="IPR002363">
    <property type="entry name" value="Ribosomal_uL10_CS_bac"/>
</dbReference>
<dbReference type="NCBIfam" id="NF000955">
    <property type="entry name" value="PRK00099.1-1"/>
    <property type="match status" value="1"/>
</dbReference>
<dbReference type="PANTHER" id="PTHR11560">
    <property type="entry name" value="39S RIBOSOMAL PROTEIN L10, MITOCHONDRIAL"/>
    <property type="match status" value="1"/>
</dbReference>
<dbReference type="Pfam" id="PF00466">
    <property type="entry name" value="Ribosomal_L10"/>
    <property type="match status" value="1"/>
</dbReference>
<dbReference type="SUPFAM" id="SSF160369">
    <property type="entry name" value="Ribosomal protein L10-like"/>
    <property type="match status" value="1"/>
</dbReference>
<dbReference type="PROSITE" id="PS01109">
    <property type="entry name" value="RIBOSOMAL_L10"/>
    <property type="match status" value="1"/>
</dbReference>
<proteinExistence type="inferred from homology"/>
<sequence>MDRAQKREFVDQLAAVFAETSMVVVSRNDGLTVADVTALRVKMREAGAQYKVAKNRLAHLALEGTRFDGLKPMLKGPTALAWSQDPVAVAKVAVEFAKTNEKFVLVGGALGTQMLDASGVKALAELPSLDQLRAKLLGLIQAPATKVAGVLQAPAGQLARVFAAYARADEADAA</sequence>
<name>RL10_ACICJ</name>
<protein>
    <recommendedName>
        <fullName evidence="1">Large ribosomal subunit protein uL10</fullName>
    </recommendedName>
    <alternativeName>
        <fullName evidence="2">50S ribosomal protein L10</fullName>
    </alternativeName>
</protein>
<reference key="1">
    <citation type="submission" date="2007-05" db="EMBL/GenBank/DDBJ databases">
        <title>Complete sequence of chromosome of Acidiphilium cryptum JF-5.</title>
        <authorList>
            <consortium name="US DOE Joint Genome Institute"/>
            <person name="Copeland A."/>
            <person name="Lucas S."/>
            <person name="Lapidus A."/>
            <person name="Barry K."/>
            <person name="Detter J.C."/>
            <person name="Glavina del Rio T."/>
            <person name="Hammon N."/>
            <person name="Israni S."/>
            <person name="Dalin E."/>
            <person name="Tice H."/>
            <person name="Pitluck S."/>
            <person name="Sims D."/>
            <person name="Brettin T."/>
            <person name="Bruce D."/>
            <person name="Han C."/>
            <person name="Schmutz J."/>
            <person name="Larimer F."/>
            <person name="Land M."/>
            <person name="Hauser L."/>
            <person name="Kyrpides N."/>
            <person name="Kim E."/>
            <person name="Magnuson T."/>
            <person name="Richardson P."/>
        </authorList>
    </citation>
    <scope>NUCLEOTIDE SEQUENCE [LARGE SCALE GENOMIC DNA]</scope>
    <source>
        <strain>JF-5</strain>
    </source>
</reference>